<dbReference type="EMBL" id="CP000903">
    <property type="protein sequence ID" value="ABY44036.1"/>
    <property type="molecule type" value="Genomic_DNA"/>
</dbReference>
<dbReference type="RefSeq" id="WP_002190044.1">
    <property type="nucleotide sequence ID" value="NC_010184.1"/>
</dbReference>
<dbReference type="KEGG" id="bwe:BcerKBAB4_2842"/>
<dbReference type="eggNOG" id="COG1671">
    <property type="taxonomic scope" value="Bacteria"/>
</dbReference>
<dbReference type="HOGENOM" id="CLU_106619_0_0_9"/>
<dbReference type="Proteomes" id="UP000002154">
    <property type="component" value="Chromosome"/>
</dbReference>
<dbReference type="HAMAP" id="MF_00489">
    <property type="entry name" value="UPF0178"/>
    <property type="match status" value="1"/>
</dbReference>
<dbReference type="InterPro" id="IPR003791">
    <property type="entry name" value="UPF0178"/>
</dbReference>
<dbReference type="NCBIfam" id="NF001095">
    <property type="entry name" value="PRK00124.1"/>
    <property type="match status" value="1"/>
</dbReference>
<dbReference type="PANTHER" id="PTHR35146">
    <property type="entry name" value="UPF0178 PROTEIN YAII"/>
    <property type="match status" value="1"/>
</dbReference>
<dbReference type="PANTHER" id="PTHR35146:SF1">
    <property type="entry name" value="UPF0178 PROTEIN YAII"/>
    <property type="match status" value="1"/>
</dbReference>
<dbReference type="Pfam" id="PF02639">
    <property type="entry name" value="DUF188"/>
    <property type="match status" value="1"/>
</dbReference>
<name>Y2842_BACMK</name>
<evidence type="ECO:0000255" key="1">
    <source>
        <dbReference type="HAMAP-Rule" id="MF_00489"/>
    </source>
</evidence>
<comment type="similarity">
    <text evidence="1">Belongs to the UPF0178 family.</text>
</comment>
<feature type="chain" id="PRO_1000126176" description="UPF0178 protein BcerKBAB4_2842">
    <location>
        <begin position="1"/>
        <end position="146"/>
    </location>
</feature>
<sequence length="146" mass="16308">MKIYVDADACPVKDVIIYEATNAEIPVTLVTSFSHYSNAKQPTGVETIYVDSGADAADYRIMQLAKKEDLIVTQDYGLASLALAKGCIVLHHKGYKYTNENIEQLLQTRYLSAMVRKSGKRTKGPKPFTAEDKEKFRVLFKSIIAL</sequence>
<proteinExistence type="inferred from homology"/>
<accession>A9VK81</accession>
<protein>
    <recommendedName>
        <fullName evidence="1">UPF0178 protein BcerKBAB4_2842</fullName>
    </recommendedName>
</protein>
<organism>
    <name type="scientific">Bacillus mycoides (strain KBAB4)</name>
    <name type="common">Bacillus weihenstephanensis</name>
    <dbReference type="NCBI Taxonomy" id="315730"/>
    <lineage>
        <taxon>Bacteria</taxon>
        <taxon>Bacillati</taxon>
        <taxon>Bacillota</taxon>
        <taxon>Bacilli</taxon>
        <taxon>Bacillales</taxon>
        <taxon>Bacillaceae</taxon>
        <taxon>Bacillus</taxon>
        <taxon>Bacillus cereus group</taxon>
    </lineage>
</organism>
<reference key="1">
    <citation type="journal article" date="2008" name="Chem. Biol. Interact.">
        <title>Extending the Bacillus cereus group genomics to putative food-borne pathogens of different toxicity.</title>
        <authorList>
            <person name="Lapidus A."/>
            <person name="Goltsman E."/>
            <person name="Auger S."/>
            <person name="Galleron N."/>
            <person name="Segurens B."/>
            <person name="Dossat C."/>
            <person name="Land M.L."/>
            <person name="Broussolle V."/>
            <person name="Brillard J."/>
            <person name="Guinebretiere M.-H."/>
            <person name="Sanchis V."/>
            <person name="Nguen-the C."/>
            <person name="Lereclus D."/>
            <person name="Richardson P."/>
            <person name="Wincker P."/>
            <person name="Weissenbach J."/>
            <person name="Ehrlich S.D."/>
            <person name="Sorokin A."/>
        </authorList>
    </citation>
    <scope>NUCLEOTIDE SEQUENCE [LARGE SCALE GENOMIC DNA]</scope>
    <source>
        <strain>KBAB4</strain>
    </source>
</reference>
<gene>
    <name type="ordered locus">BcerKBAB4_2842</name>
</gene>